<proteinExistence type="inferred from homology"/>
<evidence type="ECO:0000255" key="1">
    <source>
        <dbReference type="HAMAP-Rule" id="MF_00281"/>
    </source>
</evidence>
<keyword id="KW-0030">Aminoacyl-tRNA synthetase</keyword>
<keyword id="KW-0067">ATP-binding</keyword>
<keyword id="KW-0963">Cytoplasm</keyword>
<keyword id="KW-0436">Ligase</keyword>
<keyword id="KW-0460">Magnesium</keyword>
<keyword id="KW-0479">Metal-binding</keyword>
<keyword id="KW-0547">Nucleotide-binding</keyword>
<keyword id="KW-0648">Protein biosynthesis</keyword>
<organism>
    <name type="scientific">Rhodopseudomonas palustris (strain BisB5)</name>
    <dbReference type="NCBI Taxonomy" id="316057"/>
    <lineage>
        <taxon>Bacteria</taxon>
        <taxon>Pseudomonadati</taxon>
        <taxon>Pseudomonadota</taxon>
        <taxon>Alphaproteobacteria</taxon>
        <taxon>Hyphomicrobiales</taxon>
        <taxon>Nitrobacteraceae</taxon>
        <taxon>Rhodopseudomonas</taxon>
    </lineage>
</organism>
<name>SYFA_RHOPS</name>
<gene>
    <name evidence="1" type="primary">pheS</name>
    <name type="ordered locus">RPD_0164</name>
</gene>
<feature type="chain" id="PRO_1000006883" description="Phenylalanine--tRNA ligase alpha subunit">
    <location>
        <begin position="1"/>
        <end position="360"/>
    </location>
</feature>
<feature type="binding site" evidence="1">
    <location>
        <position position="260"/>
    </location>
    <ligand>
        <name>Mg(2+)</name>
        <dbReference type="ChEBI" id="CHEBI:18420"/>
        <note>shared with beta subunit</note>
    </ligand>
</feature>
<comment type="catalytic activity">
    <reaction evidence="1">
        <text>tRNA(Phe) + L-phenylalanine + ATP = L-phenylalanyl-tRNA(Phe) + AMP + diphosphate + H(+)</text>
        <dbReference type="Rhea" id="RHEA:19413"/>
        <dbReference type="Rhea" id="RHEA-COMP:9668"/>
        <dbReference type="Rhea" id="RHEA-COMP:9699"/>
        <dbReference type="ChEBI" id="CHEBI:15378"/>
        <dbReference type="ChEBI" id="CHEBI:30616"/>
        <dbReference type="ChEBI" id="CHEBI:33019"/>
        <dbReference type="ChEBI" id="CHEBI:58095"/>
        <dbReference type="ChEBI" id="CHEBI:78442"/>
        <dbReference type="ChEBI" id="CHEBI:78531"/>
        <dbReference type="ChEBI" id="CHEBI:456215"/>
        <dbReference type="EC" id="6.1.1.20"/>
    </reaction>
</comment>
<comment type="cofactor">
    <cofactor evidence="1">
        <name>Mg(2+)</name>
        <dbReference type="ChEBI" id="CHEBI:18420"/>
    </cofactor>
    <text evidence="1">Binds 2 magnesium ions per tetramer.</text>
</comment>
<comment type="subunit">
    <text evidence="1">Tetramer of two alpha and two beta subunits.</text>
</comment>
<comment type="subcellular location">
    <subcellularLocation>
        <location evidence="1">Cytoplasm</location>
    </subcellularLocation>
</comment>
<comment type="similarity">
    <text evidence="1">Belongs to the class-II aminoacyl-tRNA synthetase family. Phe-tRNA synthetase alpha subunit type 1 subfamily.</text>
</comment>
<dbReference type="EC" id="6.1.1.20" evidence="1"/>
<dbReference type="EMBL" id="CP000283">
    <property type="protein sequence ID" value="ABE37404.1"/>
    <property type="molecule type" value="Genomic_DNA"/>
</dbReference>
<dbReference type="SMR" id="Q13ET5"/>
<dbReference type="STRING" id="316057.RPD_0164"/>
<dbReference type="KEGG" id="rpd:RPD_0164"/>
<dbReference type="eggNOG" id="COG0016">
    <property type="taxonomic scope" value="Bacteria"/>
</dbReference>
<dbReference type="HOGENOM" id="CLU_025086_0_1_5"/>
<dbReference type="BioCyc" id="RPAL316057:RPD_RS00825-MONOMER"/>
<dbReference type="Proteomes" id="UP000001818">
    <property type="component" value="Chromosome"/>
</dbReference>
<dbReference type="GO" id="GO:0005737">
    <property type="term" value="C:cytoplasm"/>
    <property type="evidence" value="ECO:0007669"/>
    <property type="project" value="UniProtKB-SubCell"/>
</dbReference>
<dbReference type="GO" id="GO:0005524">
    <property type="term" value="F:ATP binding"/>
    <property type="evidence" value="ECO:0007669"/>
    <property type="project" value="UniProtKB-UniRule"/>
</dbReference>
<dbReference type="GO" id="GO:0000287">
    <property type="term" value="F:magnesium ion binding"/>
    <property type="evidence" value="ECO:0007669"/>
    <property type="project" value="UniProtKB-UniRule"/>
</dbReference>
<dbReference type="GO" id="GO:0004826">
    <property type="term" value="F:phenylalanine-tRNA ligase activity"/>
    <property type="evidence" value="ECO:0007669"/>
    <property type="project" value="UniProtKB-UniRule"/>
</dbReference>
<dbReference type="GO" id="GO:0000049">
    <property type="term" value="F:tRNA binding"/>
    <property type="evidence" value="ECO:0007669"/>
    <property type="project" value="InterPro"/>
</dbReference>
<dbReference type="GO" id="GO:0006432">
    <property type="term" value="P:phenylalanyl-tRNA aminoacylation"/>
    <property type="evidence" value="ECO:0007669"/>
    <property type="project" value="UniProtKB-UniRule"/>
</dbReference>
<dbReference type="CDD" id="cd00496">
    <property type="entry name" value="PheRS_alpha_core"/>
    <property type="match status" value="1"/>
</dbReference>
<dbReference type="FunFam" id="3.30.930.10:FF:000003">
    <property type="entry name" value="Phenylalanine--tRNA ligase alpha subunit"/>
    <property type="match status" value="1"/>
</dbReference>
<dbReference type="Gene3D" id="3.30.930.10">
    <property type="entry name" value="Bira Bifunctional Protein, Domain 2"/>
    <property type="match status" value="1"/>
</dbReference>
<dbReference type="HAMAP" id="MF_00281">
    <property type="entry name" value="Phe_tRNA_synth_alpha1"/>
    <property type="match status" value="1"/>
</dbReference>
<dbReference type="InterPro" id="IPR006195">
    <property type="entry name" value="aa-tRNA-synth_II"/>
</dbReference>
<dbReference type="InterPro" id="IPR045864">
    <property type="entry name" value="aa-tRNA-synth_II/BPL/LPL"/>
</dbReference>
<dbReference type="InterPro" id="IPR004529">
    <property type="entry name" value="Phe-tRNA-synth_IIc_asu"/>
</dbReference>
<dbReference type="InterPro" id="IPR004188">
    <property type="entry name" value="Phe-tRNA_ligase_II_N"/>
</dbReference>
<dbReference type="InterPro" id="IPR022911">
    <property type="entry name" value="Phe_tRNA_ligase_alpha1_bac"/>
</dbReference>
<dbReference type="InterPro" id="IPR002319">
    <property type="entry name" value="Phenylalanyl-tRNA_Synthase"/>
</dbReference>
<dbReference type="InterPro" id="IPR010978">
    <property type="entry name" value="tRNA-bd_arm"/>
</dbReference>
<dbReference type="NCBIfam" id="TIGR00468">
    <property type="entry name" value="pheS"/>
    <property type="match status" value="1"/>
</dbReference>
<dbReference type="PANTHER" id="PTHR11538:SF41">
    <property type="entry name" value="PHENYLALANINE--TRNA LIGASE, MITOCHONDRIAL"/>
    <property type="match status" value="1"/>
</dbReference>
<dbReference type="PANTHER" id="PTHR11538">
    <property type="entry name" value="PHENYLALANYL-TRNA SYNTHETASE"/>
    <property type="match status" value="1"/>
</dbReference>
<dbReference type="Pfam" id="PF02912">
    <property type="entry name" value="Phe_tRNA-synt_N"/>
    <property type="match status" value="1"/>
</dbReference>
<dbReference type="Pfam" id="PF01409">
    <property type="entry name" value="tRNA-synt_2d"/>
    <property type="match status" value="1"/>
</dbReference>
<dbReference type="SUPFAM" id="SSF55681">
    <property type="entry name" value="Class II aaRS and biotin synthetases"/>
    <property type="match status" value="1"/>
</dbReference>
<dbReference type="SUPFAM" id="SSF46589">
    <property type="entry name" value="tRNA-binding arm"/>
    <property type="match status" value="1"/>
</dbReference>
<dbReference type="PROSITE" id="PS50862">
    <property type="entry name" value="AA_TRNA_LIGASE_II"/>
    <property type="match status" value="1"/>
</dbReference>
<sequence length="360" mass="39935">MSNLENLQTQILADIAASSDEAALEAVRVGALGKKGSISALLATLGKMDPEQRKTEGAAINLAKEAVTQALTARRDLLKAAALDAKLAAETIDVTLPLREPLAEQGRIHPLSQVWDELTAIFADMGFAIAEGPDIETDDNNFTRLNFPEGHPAREMHDTFYFNPKEDGSRLLLRTHTSPVQVRTMLSQRPPIRVICPGRTYRSDSDQTHTPMFHQVEGLVIDKGSHLGHLKWILAEFCKAFFEVDNVNMRFRPSFFPFTEPSLEVDIQCRRGNGEIRFGEGEDWLEILGCGMVHPNVLTACGIDPEVYQGFAWGMGIDRIAMLKYGMADLRQLFEADSRWLNHYGFKPLDIPSLAGGLSS</sequence>
<reference key="1">
    <citation type="submission" date="2006-03" db="EMBL/GenBank/DDBJ databases">
        <title>Complete sequence of Rhodopseudomonas palustris BisB5.</title>
        <authorList>
            <consortium name="US DOE Joint Genome Institute"/>
            <person name="Copeland A."/>
            <person name="Lucas S."/>
            <person name="Lapidus A."/>
            <person name="Barry K."/>
            <person name="Detter J.C."/>
            <person name="Glavina del Rio T."/>
            <person name="Hammon N."/>
            <person name="Israni S."/>
            <person name="Dalin E."/>
            <person name="Tice H."/>
            <person name="Pitluck S."/>
            <person name="Chain P."/>
            <person name="Malfatti S."/>
            <person name="Shin M."/>
            <person name="Vergez L."/>
            <person name="Schmutz J."/>
            <person name="Larimer F."/>
            <person name="Land M."/>
            <person name="Hauser L."/>
            <person name="Pelletier D.A."/>
            <person name="Kyrpides N."/>
            <person name="Lykidis A."/>
            <person name="Oda Y."/>
            <person name="Harwood C.S."/>
            <person name="Richardson P."/>
        </authorList>
    </citation>
    <scope>NUCLEOTIDE SEQUENCE [LARGE SCALE GENOMIC DNA]</scope>
    <source>
        <strain>BisB5</strain>
    </source>
</reference>
<protein>
    <recommendedName>
        <fullName evidence="1">Phenylalanine--tRNA ligase alpha subunit</fullName>
        <ecNumber evidence="1">6.1.1.20</ecNumber>
    </recommendedName>
    <alternativeName>
        <fullName evidence="1">Phenylalanyl-tRNA synthetase alpha subunit</fullName>
        <shortName evidence="1">PheRS</shortName>
    </alternativeName>
</protein>
<accession>Q13ET5</accession>